<protein>
    <recommendedName>
        <fullName evidence="1">Large ribosomal subunit protein uL15</fullName>
    </recommendedName>
    <alternativeName>
        <fullName evidence="3">50S ribosomal protein L15</fullName>
    </alternativeName>
</protein>
<comment type="function">
    <text evidence="1">Binds to the 23S rRNA.</text>
</comment>
<comment type="subunit">
    <text evidence="1">Part of the 50S ribosomal subunit.</text>
</comment>
<comment type="similarity">
    <text evidence="1">Belongs to the universal ribosomal protein uL15 family.</text>
</comment>
<reference key="1">
    <citation type="submission" date="2007-11" db="EMBL/GenBank/DDBJ databases">
        <title>Complete sequence of Petroga mobilis SJ95.</title>
        <authorList>
            <consortium name="US DOE Joint Genome Institute"/>
            <person name="Copeland A."/>
            <person name="Lucas S."/>
            <person name="Lapidus A."/>
            <person name="Barry K."/>
            <person name="Glavina del Rio T."/>
            <person name="Dalin E."/>
            <person name="Tice H."/>
            <person name="Pitluck S."/>
            <person name="Meincke L."/>
            <person name="Brettin T."/>
            <person name="Bruce D."/>
            <person name="Detter J.C."/>
            <person name="Han C."/>
            <person name="Kuske C.R."/>
            <person name="Schmutz J."/>
            <person name="Larimer F."/>
            <person name="Land M."/>
            <person name="Hauser L."/>
            <person name="Kyrpides N."/>
            <person name="Mikhailova N."/>
            <person name="Noll K."/>
            <person name="Richardson P."/>
        </authorList>
    </citation>
    <scope>NUCLEOTIDE SEQUENCE [LARGE SCALE GENOMIC DNA]</scope>
    <source>
        <strain>DSM 10674 / SJ95</strain>
    </source>
</reference>
<feature type="chain" id="PRO_1000142855" description="Large ribosomal subunit protein uL15">
    <location>
        <begin position="1"/>
        <end position="151"/>
    </location>
</feature>
<feature type="region of interest" description="Disordered" evidence="2">
    <location>
        <begin position="1"/>
        <end position="51"/>
    </location>
</feature>
<feature type="compositionally biased region" description="Gly residues" evidence="2">
    <location>
        <begin position="23"/>
        <end position="33"/>
    </location>
</feature>
<sequence>MPLKIEDLKPTPGSRKPKKRLGRGIGSGLGKTAGKGHKGEKARGRGKIGRTFEGGQTNIIRRTPKFGFSNAPFKKVYSVVNVETLEKYFSENEEVTPDILLEKKLIKKLNDGVKILGKGEISKPLVVKANIFSQTAREKIEAVGGKIEVIE</sequence>
<dbReference type="EMBL" id="CP000879">
    <property type="protein sequence ID" value="ABX31495.1"/>
    <property type="molecule type" value="Genomic_DNA"/>
</dbReference>
<dbReference type="RefSeq" id="WP_012208598.1">
    <property type="nucleotide sequence ID" value="NC_010003.1"/>
</dbReference>
<dbReference type="SMR" id="A9BFZ9"/>
<dbReference type="STRING" id="403833.Pmob_0771"/>
<dbReference type="KEGG" id="pmo:Pmob_0771"/>
<dbReference type="eggNOG" id="COG0200">
    <property type="taxonomic scope" value="Bacteria"/>
</dbReference>
<dbReference type="HOGENOM" id="CLU_055188_4_2_0"/>
<dbReference type="OrthoDB" id="9810293at2"/>
<dbReference type="Proteomes" id="UP000000789">
    <property type="component" value="Chromosome"/>
</dbReference>
<dbReference type="GO" id="GO:0022625">
    <property type="term" value="C:cytosolic large ribosomal subunit"/>
    <property type="evidence" value="ECO:0007669"/>
    <property type="project" value="TreeGrafter"/>
</dbReference>
<dbReference type="GO" id="GO:0019843">
    <property type="term" value="F:rRNA binding"/>
    <property type="evidence" value="ECO:0007669"/>
    <property type="project" value="UniProtKB-UniRule"/>
</dbReference>
<dbReference type="GO" id="GO:0003735">
    <property type="term" value="F:structural constituent of ribosome"/>
    <property type="evidence" value="ECO:0007669"/>
    <property type="project" value="InterPro"/>
</dbReference>
<dbReference type="GO" id="GO:0006412">
    <property type="term" value="P:translation"/>
    <property type="evidence" value="ECO:0007669"/>
    <property type="project" value="UniProtKB-UniRule"/>
</dbReference>
<dbReference type="FunFam" id="3.100.10.10:FF:000005">
    <property type="entry name" value="50S ribosomal protein L15"/>
    <property type="match status" value="1"/>
</dbReference>
<dbReference type="Gene3D" id="3.100.10.10">
    <property type="match status" value="1"/>
</dbReference>
<dbReference type="HAMAP" id="MF_01341">
    <property type="entry name" value="Ribosomal_uL15"/>
    <property type="match status" value="1"/>
</dbReference>
<dbReference type="InterPro" id="IPR030878">
    <property type="entry name" value="Ribosomal_uL15"/>
</dbReference>
<dbReference type="InterPro" id="IPR021131">
    <property type="entry name" value="Ribosomal_uL15/eL18"/>
</dbReference>
<dbReference type="InterPro" id="IPR036227">
    <property type="entry name" value="Ribosomal_uL15/eL18_sf"/>
</dbReference>
<dbReference type="InterPro" id="IPR005749">
    <property type="entry name" value="Ribosomal_uL15_bac-type"/>
</dbReference>
<dbReference type="InterPro" id="IPR001196">
    <property type="entry name" value="Ribosomal_uL15_CS"/>
</dbReference>
<dbReference type="NCBIfam" id="TIGR01071">
    <property type="entry name" value="rplO_bact"/>
    <property type="match status" value="1"/>
</dbReference>
<dbReference type="PANTHER" id="PTHR12934">
    <property type="entry name" value="50S RIBOSOMAL PROTEIN L15"/>
    <property type="match status" value="1"/>
</dbReference>
<dbReference type="PANTHER" id="PTHR12934:SF11">
    <property type="entry name" value="LARGE RIBOSOMAL SUBUNIT PROTEIN UL15M"/>
    <property type="match status" value="1"/>
</dbReference>
<dbReference type="Pfam" id="PF00828">
    <property type="entry name" value="Ribosomal_L27A"/>
    <property type="match status" value="1"/>
</dbReference>
<dbReference type="SUPFAM" id="SSF52080">
    <property type="entry name" value="Ribosomal proteins L15p and L18e"/>
    <property type="match status" value="1"/>
</dbReference>
<dbReference type="PROSITE" id="PS00475">
    <property type="entry name" value="RIBOSOMAL_L15"/>
    <property type="match status" value="1"/>
</dbReference>
<keyword id="KW-0687">Ribonucleoprotein</keyword>
<keyword id="KW-0689">Ribosomal protein</keyword>
<keyword id="KW-0694">RNA-binding</keyword>
<keyword id="KW-0699">rRNA-binding</keyword>
<evidence type="ECO:0000255" key="1">
    <source>
        <dbReference type="HAMAP-Rule" id="MF_01341"/>
    </source>
</evidence>
<evidence type="ECO:0000256" key="2">
    <source>
        <dbReference type="SAM" id="MobiDB-lite"/>
    </source>
</evidence>
<evidence type="ECO:0000305" key="3"/>
<name>RL15_PETMO</name>
<accession>A9BFZ9</accession>
<gene>
    <name evidence="1" type="primary">rplO</name>
    <name type="ordered locus">Pmob_0771</name>
</gene>
<organism>
    <name type="scientific">Petrotoga mobilis (strain DSM 10674 / SJ95)</name>
    <dbReference type="NCBI Taxonomy" id="403833"/>
    <lineage>
        <taxon>Bacteria</taxon>
        <taxon>Thermotogati</taxon>
        <taxon>Thermotogota</taxon>
        <taxon>Thermotogae</taxon>
        <taxon>Petrotogales</taxon>
        <taxon>Petrotogaceae</taxon>
        <taxon>Petrotoga</taxon>
    </lineage>
</organism>
<proteinExistence type="inferred from homology"/>